<comment type="function">
    <text>Catalyzes methyl transfer from S-methylmethionine (SMM) to adenosyl-L-homocysteine (AdoMet). SMM degradation (by HMT-1, HMT-2 and HMT-3) and biosynthesis (by MMT1) constitute the SMM cycle in plants, which is probably required to achieve short term control of AdoMet level.</text>
</comment>
<comment type="catalytic activity">
    <reaction evidence="2">
        <text>S-methyl-L-methionine + L-homocysteine = 2 L-methionine + H(+)</text>
        <dbReference type="Rhea" id="RHEA:26337"/>
        <dbReference type="ChEBI" id="CHEBI:15378"/>
        <dbReference type="ChEBI" id="CHEBI:57844"/>
        <dbReference type="ChEBI" id="CHEBI:58199"/>
        <dbReference type="ChEBI" id="CHEBI:58252"/>
        <dbReference type="EC" id="2.1.1.10"/>
    </reaction>
</comment>
<comment type="cofactor">
    <cofactor evidence="1">
        <name>Zn(2+)</name>
        <dbReference type="ChEBI" id="CHEBI:29105"/>
    </cofactor>
</comment>
<comment type="activity regulation">
    <text evidence="2">Strongly inhibited by methionine.</text>
</comment>
<comment type="biophysicochemical properties">
    <kinetics>
        <KM evidence="3">29 uM for S-methylmethionine</KM>
        <KM evidence="3">1950 uM for (S,S)-AdoMet</KM>
    </kinetics>
</comment>
<comment type="subunit">
    <text evidence="2">Monomer.</text>
</comment>
<comment type="alternative products">
    <event type="alternative splicing"/>
    <isoform>
        <id>Q9SDL7-1</id>
        <name>1</name>
        <sequence type="displayed"/>
    </isoform>
    <text>A number of isoforms are produced. According to EST sequences.</text>
</comment>
<comment type="tissue specificity">
    <text evidence="3">Expressed predominantly in roots. Expressed in rosette leaves, cauline leaves and developing seeds.</text>
</comment>
<sequence length="326" mass="35980">MVLEKKSALLEDLIKKCGGCAVVDGGFATQLEIHGAAINDPLWSAVSLIKNPELIKRVHMEYLEAGADIVVTSSYQATIPGFLSRGLSIEESESLLQKSVELAVEARDRFWEKVSKVSGHSYNRALVAASIGSYGAYLADGSEYSGHYGENVSLDKLKDFHRRRLQVLVEAGPDLLAFETIPNKLEAQACVELLEEEKVQIPAWICFTSVDGEKAPSGESFEECLEPLNKSNNIYAVGINCAPPQFIENLIRKFAKLTKKAIVVYPNSGEVWDGKAKQWLPSQCFGDDEFEMFATKWRDLGAKLIGGCCRTTPSTINAISRDLKRR</sequence>
<name>HMT1_ARATH</name>
<proteinExistence type="evidence at protein level"/>
<organism>
    <name type="scientific">Arabidopsis thaliana</name>
    <name type="common">Mouse-ear cress</name>
    <dbReference type="NCBI Taxonomy" id="3702"/>
    <lineage>
        <taxon>Eukaryota</taxon>
        <taxon>Viridiplantae</taxon>
        <taxon>Streptophyta</taxon>
        <taxon>Embryophyta</taxon>
        <taxon>Tracheophyta</taxon>
        <taxon>Spermatophyta</taxon>
        <taxon>Magnoliopsida</taxon>
        <taxon>eudicotyledons</taxon>
        <taxon>Gunneridae</taxon>
        <taxon>Pentapetalae</taxon>
        <taxon>rosids</taxon>
        <taxon>malvids</taxon>
        <taxon>Brassicales</taxon>
        <taxon>Brassicaceae</taxon>
        <taxon>Camelineae</taxon>
        <taxon>Arabidopsis</taxon>
    </lineage>
</organism>
<keyword id="KW-0025">Alternative splicing</keyword>
<keyword id="KW-0028">Amino-acid biosynthesis</keyword>
<keyword id="KW-0479">Metal-binding</keyword>
<keyword id="KW-0486">Methionine biosynthesis</keyword>
<keyword id="KW-0489">Methyltransferase</keyword>
<keyword id="KW-1185">Reference proteome</keyword>
<keyword id="KW-0949">S-adenosyl-L-methionine</keyword>
<keyword id="KW-0808">Transferase</keyword>
<keyword id="KW-0862">Zinc</keyword>
<protein>
    <recommendedName>
        <fullName>Homocysteine S-methyltransferase 1</fullName>
        <ecNumber>2.1.1.10</ecNumber>
    </recommendedName>
    <alternativeName>
        <fullName>S-methylmethionine:homocysteine methyltransferase 1</fullName>
        <shortName>AtHMT-1</shortName>
        <shortName>SMM:Hcy S-methyltransferase 1</shortName>
    </alternativeName>
</protein>
<accession>Q9SDL7</accession>
<feature type="chain" id="PRO_0000114611" description="Homocysteine S-methyltransferase 1">
    <location>
        <begin position="1"/>
        <end position="326"/>
    </location>
</feature>
<feature type="domain" description="Hcy-binding" evidence="1">
    <location>
        <begin position="9"/>
        <end position="323"/>
    </location>
</feature>
<feature type="binding site" evidence="1">
    <location>
        <position position="241"/>
    </location>
    <ligand>
        <name>Zn(2+)</name>
        <dbReference type="ChEBI" id="CHEBI:29105"/>
    </ligand>
</feature>
<feature type="binding site" evidence="1">
    <location>
        <position position="308"/>
    </location>
    <ligand>
        <name>Zn(2+)</name>
        <dbReference type="ChEBI" id="CHEBI:29105"/>
    </ligand>
</feature>
<feature type="binding site" evidence="1">
    <location>
        <position position="309"/>
    </location>
    <ligand>
        <name>Zn(2+)</name>
        <dbReference type="ChEBI" id="CHEBI:29105"/>
    </ligand>
</feature>
<gene>
    <name type="primary">HMT-1</name>
    <name type="ordered locus">At3g25900</name>
    <name type="ORF">MPE11.5</name>
    <name type="ORF">MPE11.6</name>
</gene>
<dbReference type="EC" id="2.1.1.10"/>
<dbReference type="EMBL" id="AF219222">
    <property type="protein sequence ID" value="AAF23821.1"/>
    <property type="molecule type" value="Genomic_DNA"/>
</dbReference>
<dbReference type="EMBL" id="AB023041">
    <property type="protein sequence ID" value="BAB01052.1"/>
    <property type="molecule type" value="Genomic_DNA"/>
</dbReference>
<dbReference type="EMBL" id="CP002686">
    <property type="protein sequence ID" value="AEE77087.1"/>
    <property type="molecule type" value="Genomic_DNA"/>
</dbReference>
<dbReference type="EMBL" id="AY065163">
    <property type="protein sequence ID" value="AAL38339.1"/>
    <property type="molecule type" value="mRNA"/>
</dbReference>
<dbReference type="EMBL" id="AY081604">
    <property type="protein sequence ID" value="AAM10166.1"/>
    <property type="molecule type" value="mRNA"/>
</dbReference>
<dbReference type="PIR" id="T51941">
    <property type="entry name" value="T51941"/>
</dbReference>
<dbReference type="RefSeq" id="NP_189219.1">
    <molecule id="Q9SDL7-1"/>
    <property type="nucleotide sequence ID" value="NM_113493.5"/>
</dbReference>
<dbReference type="SMR" id="Q9SDL7"/>
<dbReference type="BioGRID" id="7517">
    <property type="interactions" value="1"/>
</dbReference>
<dbReference type="FunCoup" id="Q9SDL7">
    <property type="interactions" value="395"/>
</dbReference>
<dbReference type="IntAct" id="Q9SDL7">
    <property type="interactions" value="1"/>
</dbReference>
<dbReference type="STRING" id="3702.Q9SDL7"/>
<dbReference type="PaxDb" id="3702-AT3G25900.1"/>
<dbReference type="ProteomicsDB" id="230262">
    <molecule id="Q9SDL7-1"/>
</dbReference>
<dbReference type="EnsemblPlants" id="AT3G25900.1">
    <molecule id="Q9SDL7-1"/>
    <property type="protein sequence ID" value="AT3G25900.1"/>
    <property type="gene ID" value="AT3G25900"/>
</dbReference>
<dbReference type="GeneID" id="822186"/>
<dbReference type="Gramene" id="AT3G25900.1">
    <molecule id="Q9SDL7-1"/>
    <property type="protein sequence ID" value="AT3G25900.1"/>
    <property type="gene ID" value="AT3G25900"/>
</dbReference>
<dbReference type="KEGG" id="ath:AT3G25900"/>
<dbReference type="Araport" id="AT3G25900"/>
<dbReference type="TAIR" id="AT3G25900">
    <property type="gene designation" value="HMT-1"/>
</dbReference>
<dbReference type="eggNOG" id="KOG1579">
    <property type="taxonomic scope" value="Eukaryota"/>
</dbReference>
<dbReference type="InParanoid" id="Q9SDL7"/>
<dbReference type="OMA" id="FHRPRMK"/>
<dbReference type="PhylomeDB" id="Q9SDL7"/>
<dbReference type="BioCyc" id="ARA:AT3G25900-MONOMER"/>
<dbReference type="BioCyc" id="MetaCyc:AT3G25900-MONOMER"/>
<dbReference type="BRENDA" id="2.1.1.10">
    <property type="organism ID" value="399"/>
</dbReference>
<dbReference type="SABIO-RK" id="Q9SDL7"/>
<dbReference type="PRO" id="PR:Q9SDL7"/>
<dbReference type="Proteomes" id="UP000006548">
    <property type="component" value="Chromosome 3"/>
</dbReference>
<dbReference type="ExpressionAtlas" id="Q9SDL7">
    <property type="expression patterns" value="baseline and differential"/>
</dbReference>
<dbReference type="GO" id="GO:0008898">
    <property type="term" value="F:S-adenosylmethionine-homocysteine S-methyltransferase activity"/>
    <property type="evidence" value="ECO:0000314"/>
    <property type="project" value="TAIR"/>
</dbReference>
<dbReference type="GO" id="GO:0061627">
    <property type="term" value="F:S-methylmethionine-homocysteine S-methyltransferase activity"/>
    <property type="evidence" value="ECO:0007669"/>
    <property type="project" value="RHEA"/>
</dbReference>
<dbReference type="GO" id="GO:0008270">
    <property type="term" value="F:zinc ion binding"/>
    <property type="evidence" value="ECO:0007669"/>
    <property type="project" value="InterPro"/>
</dbReference>
<dbReference type="GO" id="GO:0009086">
    <property type="term" value="P:methionine biosynthetic process"/>
    <property type="evidence" value="ECO:0000314"/>
    <property type="project" value="TAIR"/>
</dbReference>
<dbReference type="GO" id="GO:0032259">
    <property type="term" value="P:methylation"/>
    <property type="evidence" value="ECO:0007669"/>
    <property type="project" value="UniProtKB-KW"/>
</dbReference>
<dbReference type="FunFam" id="3.20.20.330:FF:000002">
    <property type="entry name" value="Homocysteine S-methyltransferase"/>
    <property type="match status" value="1"/>
</dbReference>
<dbReference type="Gene3D" id="3.20.20.330">
    <property type="entry name" value="Homocysteine-binding-like domain"/>
    <property type="match status" value="1"/>
</dbReference>
<dbReference type="InterPro" id="IPR017226">
    <property type="entry name" value="Betaine-hCys_S-MeTrfase_BHMT"/>
</dbReference>
<dbReference type="InterPro" id="IPR003726">
    <property type="entry name" value="HCY_dom"/>
</dbReference>
<dbReference type="InterPro" id="IPR036589">
    <property type="entry name" value="HCY_dom_sf"/>
</dbReference>
<dbReference type="InterPro" id="IPR051486">
    <property type="entry name" value="Hcy_S-methyltransferase"/>
</dbReference>
<dbReference type="NCBIfam" id="NF007020">
    <property type="entry name" value="PRK09485.1"/>
    <property type="match status" value="1"/>
</dbReference>
<dbReference type="PANTHER" id="PTHR46015:SF7">
    <property type="entry name" value="HOMOCYSTEINE S-METHYLTRANSFERASE 1"/>
    <property type="match status" value="1"/>
</dbReference>
<dbReference type="PANTHER" id="PTHR46015">
    <property type="entry name" value="ZGC:172121"/>
    <property type="match status" value="1"/>
</dbReference>
<dbReference type="Pfam" id="PF02574">
    <property type="entry name" value="S-methyl_trans"/>
    <property type="match status" value="1"/>
</dbReference>
<dbReference type="PIRSF" id="PIRSF037505">
    <property type="entry name" value="Betaine_HMT"/>
    <property type="match status" value="1"/>
</dbReference>
<dbReference type="SUPFAM" id="SSF82282">
    <property type="entry name" value="Homocysteine S-methyltransferase"/>
    <property type="match status" value="1"/>
</dbReference>
<dbReference type="PROSITE" id="PS50970">
    <property type="entry name" value="HCY"/>
    <property type="match status" value="1"/>
</dbReference>
<evidence type="ECO:0000255" key="1">
    <source>
        <dbReference type="PROSITE-ProRule" id="PRU00333"/>
    </source>
</evidence>
<evidence type="ECO:0000269" key="2">
    <source>
    </source>
</evidence>
<evidence type="ECO:0000269" key="3">
    <source>
    </source>
</evidence>
<reference key="1">
    <citation type="journal article" date="2000" name="J. Biol. Chem.">
        <title>Characterization and functional expression of cDNAs encoding methionine-sensitive and -insensitive homocysteine S-methyltransferases from Arabidopsis.</title>
        <authorList>
            <person name="Ranocha P."/>
            <person name="Bourgis F."/>
            <person name="Ziemak M.J."/>
            <person name="Rhodes D."/>
            <person name="Gage D.A."/>
            <person name="Hanson A.D."/>
        </authorList>
    </citation>
    <scope>NUCLEOTIDE SEQUENCE [GENOMIC DNA]</scope>
    <scope>ENZYME ACTIVITY</scope>
    <scope>ACTIVITY REGULATION</scope>
    <scope>SUBUNIT</scope>
</reference>
<reference key="2">
    <citation type="journal article" date="2000" name="DNA Res.">
        <title>Structural analysis of Arabidopsis thaliana chromosome 3. I. Sequence features of the regions of 4,504,864 bp covered by sixty P1 and TAC clones.</title>
        <authorList>
            <person name="Sato S."/>
            <person name="Nakamura Y."/>
            <person name="Kaneko T."/>
            <person name="Katoh T."/>
            <person name="Asamizu E."/>
            <person name="Tabata S."/>
        </authorList>
    </citation>
    <scope>NUCLEOTIDE SEQUENCE [LARGE SCALE GENOMIC DNA]</scope>
    <source>
        <strain>cv. Columbia</strain>
    </source>
</reference>
<reference key="3">
    <citation type="journal article" date="2017" name="Plant J.">
        <title>Araport11: a complete reannotation of the Arabidopsis thaliana reference genome.</title>
        <authorList>
            <person name="Cheng C.Y."/>
            <person name="Krishnakumar V."/>
            <person name="Chan A.P."/>
            <person name="Thibaud-Nissen F."/>
            <person name="Schobel S."/>
            <person name="Town C.D."/>
        </authorList>
    </citation>
    <scope>GENOME REANNOTATION</scope>
    <source>
        <strain>cv. Columbia</strain>
    </source>
</reference>
<reference key="4">
    <citation type="journal article" date="2003" name="Science">
        <title>Empirical analysis of transcriptional activity in the Arabidopsis genome.</title>
        <authorList>
            <person name="Yamada K."/>
            <person name="Lim J."/>
            <person name="Dale J.M."/>
            <person name="Chen H."/>
            <person name="Shinn P."/>
            <person name="Palm C.J."/>
            <person name="Southwick A.M."/>
            <person name="Wu H.C."/>
            <person name="Kim C.J."/>
            <person name="Nguyen M."/>
            <person name="Pham P.K."/>
            <person name="Cheuk R.F."/>
            <person name="Karlin-Newmann G."/>
            <person name="Liu S.X."/>
            <person name="Lam B."/>
            <person name="Sakano H."/>
            <person name="Wu T."/>
            <person name="Yu G."/>
            <person name="Miranda M."/>
            <person name="Quach H.L."/>
            <person name="Tripp M."/>
            <person name="Chang C.H."/>
            <person name="Lee J.M."/>
            <person name="Toriumi M.J."/>
            <person name="Chan M.M."/>
            <person name="Tang C.C."/>
            <person name="Onodera C.S."/>
            <person name="Deng J.M."/>
            <person name="Akiyama K."/>
            <person name="Ansari Y."/>
            <person name="Arakawa T."/>
            <person name="Banh J."/>
            <person name="Banno F."/>
            <person name="Bowser L."/>
            <person name="Brooks S.Y."/>
            <person name="Carninci P."/>
            <person name="Chao Q."/>
            <person name="Choy N."/>
            <person name="Enju A."/>
            <person name="Goldsmith A.D."/>
            <person name="Gurjal M."/>
            <person name="Hansen N.F."/>
            <person name="Hayashizaki Y."/>
            <person name="Johnson-Hopson C."/>
            <person name="Hsuan V.W."/>
            <person name="Iida K."/>
            <person name="Karnes M."/>
            <person name="Khan S."/>
            <person name="Koesema E."/>
            <person name="Ishida J."/>
            <person name="Jiang P.X."/>
            <person name="Jones T."/>
            <person name="Kawai J."/>
            <person name="Kamiya A."/>
            <person name="Meyers C."/>
            <person name="Nakajima M."/>
            <person name="Narusaka M."/>
            <person name="Seki M."/>
            <person name="Sakurai T."/>
            <person name="Satou M."/>
            <person name="Tamse R."/>
            <person name="Vaysberg M."/>
            <person name="Wallender E.K."/>
            <person name="Wong C."/>
            <person name="Yamamura Y."/>
            <person name="Yuan S."/>
            <person name="Shinozaki K."/>
            <person name="Davis R.W."/>
            <person name="Theologis A."/>
            <person name="Ecker J.R."/>
        </authorList>
    </citation>
    <scope>NUCLEOTIDE SEQUENCE [LARGE SCALE MRNA]</scope>
    <source>
        <strain>cv. Columbia</strain>
    </source>
</reference>
<reference key="5">
    <citation type="journal article" date="2001" name="Plant J.">
        <title>The S-methylmethionine cycle in angiosperms: ubiquity, antiquity and activity.</title>
        <authorList>
            <person name="Ranocha P."/>
            <person name="McNeil S.D."/>
            <person name="Ziemak M.J."/>
            <person name="Li C."/>
            <person name="Tarczynski M.C."/>
            <person name="Hanson A.D."/>
        </authorList>
    </citation>
    <scope>PROBABLE FUNCTION OF SMM CYCLE</scope>
    <scope>BIOPHYSICOCHEMICAL PROPERTIES</scope>
    <scope>TISSUE SPECIFICITY</scope>
</reference>